<comment type="function">
    <text evidence="1">Catalyzes both the ATP-dependent activation of exogenously supplied lipoate to lipoyl-AMP and the transfer of the activated lipoyl onto the lipoyl domains of lipoate-dependent enzymes.</text>
</comment>
<comment type="catalytic activity">
    <reaction evidence="1">
        <text>L-lysyl-[lipoyl-carrier protein] + (R)-lipoate + ATP = N(6)-[(R)-lipoyl]-L-lysyl-[lipoyl-carrier protein] + AMP + diphosphate + H(+)</text>
        <dbReference type="Rhea" id="RHEA:49288"/>
        <dbReference type="Rhea" id="RHEA-COMP:10500"/>
        <dbReference type="Rhea" id="RHEA-COMP:10502"/>
        <dbReference type="ChEBI" id="CHEBI:15378"/>
        <dbReference type="ChEBI" id="CHEBI:29969"/>
        <dbReference type="ChEBI" id="CHEBI:30616"/>
        <dbReference type="ChEBI" id="CHEBI:33019"/>
        <dbReference type="ChEBI" id="CHEBI:83088"/>
        <dbReference type="ChEBI" id="CHEBI:83099"/>
        <dbReference type="ChEBI" id="CHEBI:456215"/>
        <dbReference type="EC" id="6.3.1.20"/>
    </reaction>
</comment>
<comment type="pathway">
    <text evidence="1">Protein modification; protein lipoylation via exogenous pathway; protein N(6)-(lipoyl)lysine from lipoate: step 1/2.</text>
</comment>
<comment type="pathway">
    <text evidence="1">Protein modification; protein lipoylation via exogenous pathway; protein N(6)-(lipoyl)lysine from lipoate: step 2/2.</text>
</comment>
<comment type="subunit">
    <text evidence="1">Monomer.</text>
</comment>
<comment type="subcellular location">
    <subcellularLocation>
        <location evidence="1">Cytoplasm</location>
    </subcellularLocation>
</comment>
<comment type="miscellaneous">
    <text evidence="1">In the transfer reaction, the free carboxyl group of lipoic acid is attached via an amide linkage to the epsilon-amino group of a specific lysine residue of lipoyl domains of lipoate-dependent enzymes.</text>
</comment>
<comment type="similarity">
    <text evidence="1">Belongs to the LplA family.</text>
</comment>
<evidence type="ECO:0000255" key="1">
    <source>
        <dbReference type="HAMAP-Rule" id="MF_01602"/>
    </source>
</evidence>
<evidence type="ECO:0000255" key="2">
    <source>
        <dbReference type="PROSITE-ProRule" id="PRU01067"/>
    </source>
</evidence>
<reference key="1">
    <citation type="journal article" date="2007" name="J. Bacteriol.">
        <title>The genome sequence of avian pathogenic Escherichia coli strain O1:K1:H7 shares strong similarities with human extraintestinal pathogenic E. coli genomes.</title>
        <authorList>
            <person name="Johnson T.J."/>
            <person name="Kariyawasam S."/>
            <person name="Wannemuehler Y."/>
            <person name="Mangiamele P."/>
            <person name="Johnson S.J."/>
            <person name="Doetkott C."/>
            <person name="Skyberg J.A."/>
            <person name="Lynne A.M."/>
            <person name="Johnson J.R."/>
            <person name="Nolan L.K."/>
        </authorList>
    </citation>
    <scope>NUCLEOTIDE SEQUENCE [LARGE SCALE GENOMIC DNA]</scope>
</reference>
<protein>
    <recommendedName>
        <fullName evidence="1">Lipoate-protein ligase A</fullName>
        <ecNumber evidence="1">6.3.1.20</ecNumber>
    </recommendedName>
    <alternativeName>
        <fullName evidence="1">Lipoate--protein ligase</fullName>
    </alternativeName>
</protein>
<accession>A1AJV3</accession>
<sequence length="338" mass="37897">MSTLRLLISDSYDPWFNLAVEECIFRQMPATQRVLFLWRNADTVVIGRAQNPWKECNTRRMEEDNVRLARRSSGGGAVFHDLGNTCFTFMAGKPEYDKTISTSIVLNALNALGVSAEASGRNDLVVKTAEGDRKVSGSAYRETKDRGFHHGTLLLNSDLSRLANYLNPDKKKLAAKGITSVRSRVTNLTELLPGITHEQVCEAITEAFFAHYGERVEAEIISPDKTPDLPNFAETFARQSSWEWNFGQAPAFSHLLDERFTWGGVELHFDVEKGHITRAQVFTDSLNPAPLEALAGRLQGCLYRADMLQQECEALLVDFPEQEKELRELSAWIAGAVR</sequence>
<proteinExistence type="inferred from homology"/>
<dbReference type="EC" id="6.3.1.20" evidence="1"/>
<dbReference type="EMBL" id="CP000468">
    <property type="protein sequence ID" value="ABJ03943.1"/>
    <property type="molecule type" value="Genomic_DNA"/>
</dbReference>
<dbReference type="RefSeq" id="WP_000105871.1">
    <property type="nucleotide sequence ID" value="NZ_CADILS010000013.1"/>
</dbReference>
<dbReference type="SMR" id="A1AJV3"/>
<dbReference type="KEGG" id="ecv:APECO1_1995"/>
<dbReference type="HOGENOM" id="CLU_022986_0_1_6"/>
<dbReference type="UniPathway" id="UPA00537">
    <property type="reaction ID" value="UER00594"/>
</dbReference>
<dbReference type="UniPathway" id="UPA00537">
    <property type="reaction ID" value="UER00595"/>
</dbReference>
<dbReference type="Proteomes" id="UP000008216">
    <property type="component" value="Chromosome"/>
</dbReference>
<dbReference type="GO" id="GO:0005829">
    <property type="term" value="C:cytosol"/>
    <property type="evidence" value="ECO:0007669"/>
    <property type="project" value="TreeGrafter"/>
</dbReference>
<dbReference type="GO" id="GO:0005524">
    <property type="term" value="F:ATP binding"/>
    <property type="evidence" value="ECO:0007669"/>
    <property type="project" value="UniProtKB-KW"/>
</dbReference>
<dbReference type="GO" id="GO:0016979">
    <property type="term" value="F:lipoate-protein ligase activity"/>
    <property type="evidence" value="ECO:0007669"/>
    <property type="project" value="UniProtKB-UniRule"/>
</dbReference>
<dbReference type="GO" id="GO:0017118">
    <property type="term" value="F:lipoyltransferase activity"/>
    <property type="evidence" value="ECO:0007669"/>
    <property type="project" value="TreeGrafter"/>
</dbReference>
<dbReference type="GO" id="GO:0036211">
    <property type="term" value="P:protein modification process"/>
    <property type="evidence" value="ECO:0007669"/>
    <property type="project" value="InterPro"/>
</dbReference>
<dbReference type="CDD" id="cd16435">
    <property type="entry name" value="BPL_LplA_LipB"/>
    <property type="match status" value="1"/>
</dbReference>
<dbReference type="FunFam" id="3.30.390.50:FF:000002">
    <property type="entry name" value="Lipoate-protein ligase A"/>
    <property type="match status" value="1"/>
</dbReference>
<dbReference type="FunFam" id="3.30.930.10:FF:000024">
    <property type="entry name" value="Lipoate-protein ligase A"/>
    <property type="match status" value="1"/>
</dbReference>
<dbReference type="Gene3D" id="3.30.930.10">
    <property type="entry name" value="Bira Bifunctional Protein, Domain 2"/>
    <property type="match status" value="1"/>
</dbReference>
<dbReference type="Gene3D" id="3.30.390.50">
    <property type="entry name" value="CO dehydrogenase flavoprotein, C-terminal domain"/>
    <property type="match status" value="1"/>
</dbReference>
<dbReference type="HAMAP" id="MF_01602">
    <property type="entry name" value="LplA"/>
    <property type="match status" value="1"/>
</dbReference>
<dbReference type="InterPro" id="IPR045864">
    <property type="entry name" value="aa-tRNA-synth_II/BPL/LPL"/>
</dbReference>
<dbReference type="InterPro" id="IPR004143">
    <property type="entry name" value="BPL_LPL_catalytic"/>
</dbReference>
<dbReference type="InterPro" id="IPR023741">
    <property type="entry name" value="Lipoate_ligase_A"/>
</dbReference>
<dbReference type="InterPro" id="IPR019491">
    <property type="entry name" value="Lipoate_protein_ligase_C"/>
</dbReference>
<dbReference type="InterPro" id="IPR004562">
    <property type="entry name" value="LipoylTrfase_LipoateP_Ligase"/>
</dbReference>
<dbReference type="NCBIfam" id="TIGR00545">
    <property type="entry name" value="lipoyltrans"/>
    <property type="match status" value="1"/>
</dbReference>
<dbReference type="PANTHER" id="PTHR12561">
    <property type="entry name" value="LIPOATE-PROTEIN LIGASE"/>
    <property type="match status" value="1"/>
</dbReference>
<dbReference type="PANTHER" id="PTHR12561:SF3">
    <property type="entry name" value="LIPOYLTRANSFERASE 1, MITOCHONDRIAL"/>
    <property type="match status" value="1"/>
</dbReference>
<dbReference type="Pfam" id="PF10437">
    <property type="entry name" value="Lip_prot_lig_C"/>
    <property type="match status" value="1"/>
</dbReference>
<dbReference type="Pfam" id="PF21948">
    <property type="entry name" value="LplA-B_cat"/>
    <property type="match status" value="1"/>
</dbReference>
<dbReference type="SUPFAM" id="SSF55681">
    <property type="entry name" value="Class II aaRS and biotin synthetases"/>
    <property type="match status" value="1"/>
</dbReference>
<dbReference type="SUPFAM" id="SSF82649">
    <property type="entry name" value="SufE/NifU"/>
    <property type="match status" value="1"/>
</dbReference>
<dbReference type="PROSITE" id="PS51733">
    <property type="entry name" value="BPL_LPL_CATALYTIC"/>
    <property type="match status" value="1"/>
</dbReference>
<organism>
    <name type="scientific">Escherichia coli O1:K1 / APEC</name>
    <dbReference type="NCBI Taxonomy" id="405955"/>
    <lineage>
        <taxon>Bacteria</taxon>
        <taxon>Pseudomonadati</taxon>
        <taxon>Pseudomonadota</taxon>
        <taxon>Gammaproteobacteria</taxon>
        <taxon>Enterobacterales</taxon>
        <taxon>Enterobacteriaceae</taxon>
        <taxon>Escherichia</taxon>
    </lineage>
</organism>
<keyword id="KW-0067">ATP-binding</keyword>
<keyword id="KW-0963">Cytoplasm</keyword>
<keyword id="KW-0436">Ligase</keyword>
<keyword id="KW-0547">Nucleotide-binding</keyword>
<keyword id="KW-1185">Reference proteome</keyword>
<name>LPLA_ECOK1</name>
<feature type="chain" id="PRO_1000069379" description="Lipoate-protein ligase A">
    <location>
        <begin position="1"/>
        <end position="338"/>
    </location>
</feature>
<feature type="domain" description="BPL/LPL catalytic" evidence="2">
    <location>
        <begin position="29"/>
        <end position="216"/>
    </location>
</feature>
<feature type="binding site" evidence="1">
    <location>
        <position position="71"/>
    </location>
    <ligand>
        <name>ATP</name>
        <dbReference type="ChEBI" id="CHEBI:30616"/>
    </ligand>
</feature>
<feature type="binding site" evidence="1">
    <location>
        <begin position="76"/>
        <end position="79"/>
    </location>
    <ligand>
        <name>ATP</name>
        <dbReference type="ChEBI" id="CHEBI:30616"/>
    </ligand>
</feature>
<feature type="binding site" evidence="1">
    <location>
        <position position="134"/>
    </location>
    <ligand>
        <name>(R)-lipoate</name>
        <dbReference type="ChEBI" id="CHEBI:83088"/>
    </ligand>
</feature>
<feature type="binding site" evidence="1">
    <location>
        <position position="134"/>
    </location>
    <ligand>
        <name>ATP</name>
        <dbReference type="ChEBI" id="CHEBI:30616"/>
    </ligand>
</feature>
<gene>
    <name evidence="1" type="primary">lplA</name>
    <name type="ordered locus">Ecok1_44490</name>
    <name type="ORF">APECO1_1995</name>
</gene>